<accession>A6VQ31</accession>
<feature type="chain" id="PRO_0000369991" description="3-deoxy-manno-octulosonate cytidylyltransferase">
    <location>
        <begin position="1"/>
        <end position="259"/>
    </location>
</feature>
<proteinExistence type="inferred from homology"/>
<reference key="1">
    <citation type="journal article" date="2010" name="BMC Genomics">
        <title>A genomic perspective on the potential of Actinobacillus succinogenes for industrial succinate production.</title>
        <authorList>
            <person name="McKinlay J.B."/>
            <person name="Laivenieks M."/>
            <person name="Schindler B.D."/>
            <person name="McKinlay A.A."/>
            <person name="Siddaramappa S."/>
            <person name="Challacombe J.F."/>
            <person name="Lowry S.R."/>
            <person name="Clum A."/>
            <person name="Lapidus A.L."/>
            <person name="Burkhart K.B."/>
            <person name="Harkins V."/>
            <person name="Vieille C."/>
        </authorList>
    </citation>
    <scope>NUCLEOTIDE SEQUENCE [LARGE SCALE GENOMIC DNA]</scope>
    <source>
        <strain>ATCC 55618 / DSM 22257 / CCUG 43843 / 130Z</strain>
    </source>
</reference>
<name>KDSB_ACTSZ</name>
<organism>
    <name type="scientific">Actinobacillus succinogenes (strain ATCC 55618 / DSM 22257 / CCUG 43843 / 130Z)</name>
    <dbReference type="NCBI Taxonomy" id="339671"/>
    <lineage>
        <taxon>Bacteria</taxon>
        <taxon>Pseudomonadati</taxon>
        <taxon>Pseudomonadota</taxon>
        <taxon>Gammaproteobacteria</taxon>
        <taxon>Pasteurellales</taxon>
        <taxon>Pasteurellaceae</taxon>
        <taxon>Actinobacillus</taxon>
    </lineage>
</organism>
<dbReference type="EC" id="2.7.7.38" evidence="1"/>
<dbReference type="EMBL" id="CP000746">
    <property type="protein sequence ID" value="ABR75078.1"/>
    <property type="molecule type" value="Genomic_DNA"/>
</dbReference>
<dbReference type="RefSeq" id="WP_012073455.1">
    <property type="nucleotide sequence ID" value="NC_009655.1"/>
</dbReference>
<dbReference type="SMR" id="A6VQ31"/>
<dbReference type="STRING" id="339671.Asuc_1726"/>
<dbReference type="KEGG" id="asu:Asuc_1726"/>
<dbReference type="eggNOG" id="COG1212">
    <property type="taxonomic scope" value="Bacteria"/>
</dbReference>
<dbReference type="HOGENOM" id="CLU_065038_1_0_6"/>
<dbReference type="OrthoDB" id="9815559at2"/>
<dbReference type="UniPathway" id="UPA00030"/>
<dbReference type="UniPathway" id="UPA00358">
    <property type="reaction ID" value="UER00476"/>
</dbReference>
<dbReference type="Proteomes" id="UP000001114">
    <property type="component" value="Chromosome"/>
</dbReference>
<dbReference type="GO" id="GO:0005829">
    <property type="term" value="C:cytosol"/>
    <property type="evidence" value="ECO:0007669"/>
    <property type="project" value="TreeGrafter"/>
</dbReference>
<dbReference type="GO" id="GO:0008690">
    <property type="term" value="F:3-deoxy-manno-octulosonate cytidylyltransferase activity"/>
    <property type="evidence" value="ECO:0007669"/>
    <property type="project" value="UniProtKB-UniRule"/>
</dbReference>
<dbReference type="GO" id="GO:0033468">
    <property type="term" value="P:CMP-keto-3-deoxy-D-manno-octulosonic acid biosynthetic process"/>
    <property type="evidence" value="ECO:0007669"/>
    <property type="project" value="UniProtKB-UniRule"/>
</dbReference>
<dbReference type="GO" id="GO:0009103">
    <property type="term" value="P:lipopolysaccharide biosynthetic process"/>
    <property type="evidence" value="ECO:0007669"/>
    <property type="project" value="UniProtKB-UniRule"/>
</dbReference>
<dbReference type="CDD" id="cd02517">
    <property type="entry name" value="CMP-KDO-Synthetase"/>
    <property type="match status" value="1"/>
</dbReference>
<dbReference type="FunFam" id="3.90.550.10:FF:000011">
    <property type="entry name" value="3-deoxy-manno-octulosonate cytidylyltransferase"/>
    <property type="match status" value="1"/>
</dbReference>
<dbReference type="Gene3D" id="3.90.550.10">
    <property type="entry name" value="Spore Coat Polysaccharide Biosynthesis Protein SpsA, Chain A"/>
    <property type="match status" value="1"/>
</dbReference>
<dbReference type="HAMAP" id="MF_00057">
    <property type="entry name" value="KdsB"/>
    <property type="match status" value="1"/>
</dbReference>
<dbReference type="InterPro" id="IPR003329">
    <property type="entry name" value="Cytidylyl_trans"/>
</dbReference>
<dbReference type="InterPro" id="IPR004528">
    <property type="entry name" value="KdsB"/>
</dbReference>
<dbReference type="InterPro" id="IPR029044">
    <property type="entry name" value="Nucleotide-diphossugar_trans"/>
</dbReference>
<dbReference type="NCBIfam" id="TIGR00466">
    <property type="entry name" value="kdsB"/>
    <property type="match status" value="1"/>
</dbReference>
<dbReference type="NCBIfam" id="NF003950">
    <property type="entry name" value="PRK05450.1-3"/>
    <property type="match status" value="1"/>
</dbReference>
<dbReference type="NCBIfam" id="NF003952">
    <property type="entry name" value="PRK05450.1-5"/>
    <property type="match status" value="1"/>
</dbReference>
<dbReference type="NCBIfam" id="NF009905">
    <property type="entry name" value="PRK13368.1"/>
    <property type="match status" value="1"/>
</dbReference>
<dbReference type="PANTHER" id="PTHR42866">
    <property type="entry name" value="3-DEOXY-MANNO-OCTULOSONATE CYTIDYLYLTRANSFERASE"/>
    <property type="match status" value="1"/>
</dbReference>
<dbReference type="PANTHER" id="PTHR42866:SF2">
    <property type="entry name" value="3-DEOXY-MANNO-OCTULOSONATE CYTIDYLYLTRANSFERASE, MITOCHONDRIAL"/>
    <property type="match status" value="1"/>
</dbReference>
<dbReference type="Pfam" id="PF02348">
    <property type="entry name" value="CTP_transf_3"/>
    <property type="match status" value="1"/>
</dbReference>
<dbReference type="SUPFAM" id="SSF53448">
    <property type="entry name" value="Nucleotide-diphospho-sugar transferases"/>
    <property type="match status" value="1"/>
</dbReference>
<comment type="function">
    <text evidence="1">Activates KDO (a required 8-carbon sugar) for incorporation into bacterial lipopolysaccharide in Gram-negative bacteria.</text>
</comment>
<comment type="catalytic activity">
    <reaction evidence="1">
        <text>3-deoxy-alpha-D-manno-oct-2-ulosonate + CTP = CMP-3-deoxy-beta-D-manno-octulosonate + diphosphate</text>
        <dbReference type="Rhea" id="RHEA:23448"/>
        <dbReference type="ChEBI" id="CHEBI:33019"/>
        <dbReference type="ChEBI" id="CHEBI:37563"/>
        <dbReference type="ChEBI" id="CHEBI:85986"/>
        <dbReference type="ChEBI" id="CHEBI:85987"/>
        <dbReference type="EC" id="2.7.7.38"/>
    </reaction>
</comment>
<comment type="pathway">
    <text evidence="1">Nucleotide-sugar biosynthesis; CMP-3-deoxy-D-manno-octulosonate biosynthesis; CMP-3-deoxy-D-manno-octulosonate from 3-deoxy-D-manno-octulosonate and CTP: step 1/1.</text>
</comment>
<comment type="pathway">
    <text evidence="1">Bacterial outer membrane biogenesis; lipopolysaccharide biosynthesis.</text>
</comment>
<comment type="subcellular location">
    <subcellularLocation>
        <location evidence="1">Cytoplasm</location>
    </subcellularLocation>
</comment>
<comment type="similarity">
    <text evidence="1">Belongs to the KdsB family.</text>
</comment>
<protein>
    <recommendedName>
        <fullName evidence="1">3-deoxy-manno-octulosonate cytidylyltransferase</fullName>
        <ecNumber evidence="1">2.7.7.38</ecNumber>
    </recommendedName>
    <alternativeName>
        <fullName evidence="1">CMP-2-keto-3-deoxyoctulosonic acid synthase</fullName>
        <shortName evidence="1">CKS</shortName>
        <shortName evidence="1">CMP-KDO synthase</shortName>
    </alternativeName>
</protein>
<evidence type="ECO:0000255" key="1">
    <source>
        <dbReference type="HAMAP-Rule" id="MF_00057"/>
    </source>
</evidence>
<keyword id="KW-0963">Cytoplasm</keyword>
<keyword id="KW-0448">Lipopolysaccharide biosynthesis</keyword>
<keyword id="KW-0548">Nucleotidyltransferase</keyword>
<keyword id="KW-1185">Reference proteome</keyword>
<keyword id="KW-0808">Transferase</keyword>
<gene>
    <name evidence="1" type="primary">kdsB</name>
    <name type="ordered locus">Asuc_1726</name>
</gene>
<sequence length="259" mass="29051">MTTFTVIIPARFASSRLPGKPLADIAGKPMIRHVWEKARRSGASRVVVATDNEQVKNAVLQFGGEVCMTSEKHNSGTERLAEVVEKLDIADDEIIVNIQGDEPLIPPVIVQQVAANLAKYRVNMASLAVKIEDVQELFNPNAVKVLTDQAGYVLYFSRAAIPWNRDEFADIAANTKNLDDLRLGDHYLRHIGIYAYRAGFIKRYVQWQPTALEKIESLEQLRVLWYGERIHVELAEEVPAVGVDTPEDLEKVRSILTAF</sequence>